<reference key="1">
    <citation type="journal article" date="2006" name="PLoS Biol.">
        <title>Metabolic complementarity and genomics of the dual bacterial symbiosis of sharpshooters.</title>
        <authorList>
            <person name="Wu D."/>
            <person name="Daugherty S.C."/>
            <person name="Van Aken S.E."/>
            <person name="Pai G.H."/>
            <person name="Watkins K.L."/>
            <person name="Khouri H."/>
            <person name="Tallon L.J."/>
            <person name="Zaborsky J.M."/>
            <person name="Dunbar H.E."/>
            <person name="Tran P.L."/>
            <person name="Moran N.A."/>
            <person name="Eisen J.A."/>
        </authorList>
    </citation>
    <scope>NUCLEOTIDE SEQUENCE [LARGE SCALE GENOMIC DNA]</scope>
</reference>
<dbReference type="EC" id="2.2.1.2" evidence="2"/>
<dbReference type="EMBL" id="CP000238">
    <property type="protein sequence ID" value="ABF13893.1"/>
    <property type="molecule type" value="Genomic_DNA"/>
</dbReference>
<dbReference type="RefSeq" id="WP_011520287.1">
    <property type="nucleotide sequence ID" value="NC_007984.1"/>
</dbReference>
<dbReference type="SMR" id="Q1LU10"/>
<dbReference type="STRING" id="374463.BCI_0076"/>
<dbReference type="KEGG" id="bci:BCI_0076"/>
<dbReference type="HOGENOM" id="CLU_047470_0_1_6"/>
<dbReference type="OrthoDB" id="9809101at2"/>
<dbReference type="UniPathway" id="UPA00115">
    <property type="reaction ID" value="UER00414"/>
</dbReference>
<dbReference type="Proteomes" id="UP000002427">
    <property type="component" value="Chromosome"/>
</dbReference>
<dbReference type="GO" id="GO:0005829">
    <property type="term" value="C:cytosol"/>
    <property type="evidence" value="ECO:0007669"/>
    <property type="project" value="TreeGrafter"/>
</dbReference>
<dbReference type="GO" id="GO:0004801">
    <property type="term" value="F:transaldolase activity"/>
    <property type="evidence" value="ECO:0000250"/>
    <property type="project" value="UniProtKB"/>
</dbReference>
<dbReference type="GO" id="GO:0005975">
    <property type="term" value="P:carbohydrate metabolic process"/>
    <property type="evidence" value="ECO:0007669"/>
    <property type="project" value="InterPro"/>
</dbReference>
<dbReference type="GO" id="GO:0006098">
    <property type="term" value="P:pentose-phosphate shunt"/>
    <property type="evidence" value="ECO:0007669"/>
    <property type="project" value="UniProtKB-UniRule"/>
</dbReference>
<dbReference type="CDD" id="cd00957">
    <property type="entry name" value="Transaldolase_TalAB"/>
    <property type="match status" value="1"/>
</dbReference>
<dbReference type="FunFam" id="3.20.20.70:FF:000002">
    <property type="entry name" value="Transaldolase"/>
    <property type="match status" value="1"/>
</dbReference>
<dbReference type="Gene3D" id="3.20.20.70">
    <property type="entry name" value="Aldolase class I"/>
    <property type="match status" value="1"/>
</dbReference>
<dbReference type="HAMAP" id="MF_00492">
    <property type="entry name" value="Transaldolase_1"/>
    <property type="match status" value="1"/>
</dbReference>
<dbReference type="InterPro" id="IPR013785">
    <property type="entry name" value="Aldolase_TIM"/>
</dbReference>
<dbReference type="InterPro" id="IPR001585">
    <property type="entry name" value="TAL/FSA"/>
</dbReference>
<dbReference type="InterPro" id="IPR004730">
    <property type="entry name" value="Transaldolase_1"/>
</dbReference>
<dbReference type="InterPro" id="IPR018225">
    <property type="entry name" value="Transaldolase_AS"/>
</dbReference>
<dbReference type="NCBIfam" id="NF009001">
    <property type="entry name" value="PRK12346.1"/>
    <property type="match status" value="1"/>
</dbReference>
<dbReference type="NCBIfam" id="TIGR00874">
    <property type="entry name" value="talAB"/>
    <property type="match status" value="1"/>
</dbReference>
<dbReference type="PANTHER" id="PTHR10683">
    <property type="entry name" value="TRANSALDOLASE"/>
    <property type="match status" value="1"/>
</dbReference>
<dbReference type="PANTHER" id="PTHR10683:SF16">
    <property type="entry name" value="TRANSALDOLASE A"/>
    <property type="match status" value="1"/>
</dbReference>
<dbReference type="Pfam" id="PF00923">
    <property type="entry name" value="TAL_FSA"/>
    <property type="match status" value="1"/>
</dbReference>
<dbReference type="SUPFAM" id="SSF51569">
    <property type="entry name" value="Aldolase"/>
    <property type="match status" value="1"/>
</dbReference>
<dbReference type="PROSITE" id="PS00958">
    <property type="entry name" value="TRANSALDOLASE_2"/>
    <property type="match status" value="1"/>
</dbReference>
<sequence>MNQLESLKQFTTIVADSGDIELIRHYTPQDTTTNPSLILKATSLSYYQNMLEDVLAYARKQSGNHNAKMRAASDKLAVNIGLEILKIIPGRISTEIDARFSFNSDMCINHAHKIVSLYQEQGINKSRVLIKLASTWEGIKAAEELEKAGINCNLTLIFSFAQARACAEANVYLISPFVGRIYDWYNQRKLLTEDSYDREDPGVKSVHKIYDYYKQHRYQTIVMGASFRKIDQILALAGCDYLTISPVLLEKLRSSYQHVERQLFPATKFFHKPIPLSESQFRWEHNQDAMAVDQLADGIRKFALDQYNIEKILAKKL</sequence>
<accession>Q1LU10</accession>
<name>TAL_BAUCH</name>
<comment type="function">
    <text evidence="2">Transaldolase is important for the balance of metabolites in the pentose-phosphate pathway.</text>
</comment>
<comment type="catalytic activity">
    <reaction evidence="2">
        <text>D-sedoheptulose 7-phosphate + D-glyceraldehyde 3-phosphate = D-erythrose 4-phosphate + beta-D-fructose 6-phosphate</text>
        <dbReference type="Rhea" id="RHEA:17053"/>
        <dbReference type="ChEBI" id="CHEBI:16897"/>
        <dbReference type="ChEBI" id="CHEBI:57483"/>
        <dbReference type="ChEBI" id="CHEBI:57634"/>
        <dbReference type="ChEBI" id="CHEBI:59776"/>
        <dbReference type="EC" id="2.2.1.2"/>
    </reaction>
</comment>
<comment type="pathway">
    <text evidence="2">Carbohydrate degradation; pentose phosphate pathway; D-glyceraldehyde 3-phosphate and beta-D-fructose 6-phosphate from D-ribose 5-phosphate and D-xylulose 5-phosphate (non-oxidative stage): step 2/3.</text>
</comment>
<comment type="subunit">
    <text evidence="1">Homodimer.</text>
</comment>
<comment type="subcellular location">
    <subcellularLocation>
        <location evidence="2">Cytoplasm</location>
    </subcellularLocation>
</comment>
<comment type="similarity">
    <text evidence="2">Belongs to the transaldolase family. Type 1 subfamily.</text>
</comment>
<keyword id="KW-0963">Cytoplasm</keyword>
<keyword id="KW-0570">Pentose shunt</keyword>
<keyword id="KW-1185">Reference proteome</keyword>
<keyword id="KW-0704">Schiff base</keyword>
<keyword id="KW-0808">Transferase</keyword>
<gene>
    <name evidence="2" type="primary">tal</name>
    <name type="ordered locus">BCI_0076</name>
</gene>
<organism>
    <name type="scientific">Baumannia cicadellinicola subsp. Homalodisca coagulata</name>
    <dbReference type="NCBI Taxonomy" id="374463"/>
    <lineage>
        <taxon>Bacteria</taxon>
        <taxon>Pseudomonadati</taxon>
        <taxon>Pseudomonadota</taxon>
        <taxon>Gammaproteobacteria</taxon>
        <taxon>Candidatus Palibaumannia</taxon>
    </lineage>
</organism>
<feature type="chain" id="PRO_1000014484" description="Transaldolase">
    <location>
        <begin position="1"/>
        <end position="317"/>
    </location>
</feature>
<feature type="active site" description="Schiff-base intermediate with substrate" evidence="2">
    <location>
        <position position="131"/>
    </location>
</feature>
<proteinExistence type="inferred from homology"/>
<protein>
    <recommendedName>
        <fullName evidence="2">Transaldolase</fullName>
        <ecNumber evidence="2">2.2.1.2</ecNumber>
    </recommendedName>
</protein>
<evidence type="ECO:0000250" key="1"/>
<evidence type="ECO:0000255" key="2">
    <source>
        <dbReference type="HAMAP-Rule" id="MF_00492"/>
    </source>
</evidence>